<proteinExistence type="evidence at protein level"/>
<sequence length="857" mass="96048">MLRLGALRLRGLALRSSQGRPSSAGLREGQESPPSPPEWKDRAETVIIGGGCVGVSLAYHLAKAGMRDVVLLEKSELTAGSTWHAAGLTTYFHPGINLKKIHYDSIKLYERLEEETGQVVGFHQPGSIRLATTPERVDEFKYQMTRTNWHATEQYIIEPEKIHELFPLLNMDKILAGLYNPGDGHIDPYSLTMALATGARKYGVLLKYPAPVTSLKPRPDGTWDVETPQGSVRANRIVNAAGFWAREVGKMIGLDHPLIPVQHQYVVTSTIPEVKALKRELPVLRDLEGSYYLRQERDGLLFGPYESQEKMKLQASWVAHGVPPGFGKELFESDLDRITEHVEAAMEMVPVLKKADIINIVNGPITYSPDILPMVGPHQGVRNYWVAIGFGYGIIHAGGVGKYLSDWILHGEPPFDLIELDPNRYGKWTTTQYTEAKARESYGFNNIVGYPKEERFAGRPTQRVSGLYKILESKCSMGFHAGWEQPHWFYKPGQDTQYRPSFRRTNWFRPVGSEYKQVMQRVGVIDLSPFGKFNIKGQDSTQLLDHLCANVIPKVGFTNISHMLTPRGRVYAELTVSHQSPGEFLLITGSGSELHDLRWIEEAAVRGGYDVEIRNITDELGVLGVAGPYARRVLQKLTSEDLSDDVFKFLQTKSLKISDIPVTAIRISYTGELGWELYHRREDSAALYERIMNAGQEEGIDNFGTYALNALRLEKAFRAWGSEMNCDTNPLEAGLDYFIKLNKPADFTGKQALKQIKAKGLKRRLVCLTLATDDVDPEGNESVWYKGKVIGNTTSGSYSYSIQKSLAFAYVPVELSEVGQQVEVELLGKNYPATIIQEPLVLTEPTRTRLQKDGRKS</sequence>
<name>M2GD_RAT</name>
<evidence type="ECO:0000250" key="1">
    <source>
        <dbReference type="UniProtKB" id="Q9DBT9"/>
    </source>
</evidence>
<evidence type="ECO:0000255" key="2"/>
<evidence type="ECO:0000256" key="3">
    <source>
        <dbReference type="SAM" id="MobiDB-lite"/>
    </source>
</evidence>
<evidence type="ECO:0000269" key="4">
    <source>
    </source>
</evidence>
<evidence type="ECO:0000269" key="5">
    <source>
    </source>
</evidence>
<evidence type="ECO:0000269" key="6">
    <source>
    </source>
</evidence>
<evidence type="ECO:0000305" key="7"/>
<evidence type="ECO:0007744" key="8">
    <source>
        <dbReference type="PDB" id="4P9S"/>
    </source>
</evidence>
<evidence type="ECO:0007744" key="9">
    <source>
        <dbReference type="PDB" id="4PAA"/>
    </source>
</evidence>
<evidence type="ECO:0007744" key="10">
    <source>
        <dbReference type="PDB" id="4PAB"/>
    </source>
</evidence>
<evidence type="ECO:0007829" key="11">
    <source>
        <dbReference type="PDB" id="4PAA"/>
    </source>
</evidence>
<evidence type="ECO:0007829" key="12">
    <source>
        <dbReference type="PDB" id="4PAB"/>
    </source>
</evidence>
<reference key="1">
    <citation type="journal article" date="1991" name="Eur. J. Biochem.">
        <title>Rat liver dimethylglycine dehydrogenase. Flavinylation of the enzyme in hepatocytes in primary culture and characterization of a cDNA clone.</title>
        <authorList>
            <person name="Lang H."/>
            <person name="Polster M."/>
            <person name="Brandsch R."/>
        </authorList>
    </citation>
    <scope>NUCLEOTIDE SEQUENCE [MRNA]</scope>
    <source>
        <strain>Wistar</strain>
        <tissue>Liver</tissue>
    </source>
</reference>
<reference key="2">
    <citation type="journal article" date="1985" name="J. Biol. Chem.">
        <title>The amino acid sequences of the flavin-peptides of dimethylglycine dehydrogenase and sarcosine dehydrogenase from rat liver mitochondria.</title>
        <authorList>
            <person name="Cook R.J."/>
            <person name="Misono K.S."/>
            <person name="Wagner C."/>
        </authorList>
    </citation>
    <scope>PROTEIN SEQUENCE OF 75-99</scope>
    <scope>COFACTOR</scope>
    <scope>FAD-BINDING</scope>
    <source>
        <tissue>Liver</tissue>
    </source>
</reference>
<reference key="3">
    <citation type="journal article" date="1985" name="Arch. Biochem. Biophys.">
        <title>Enzymatic properties of dimethylglycine dehydrogenase and sarcosine dehydrogenase from rat liver.</title>
        <authorList>
            <person name="Porter D.H."/>
            <person name="Cook R.J."/>
            <person name="Wagner C."/>
        </authorList>
    </citation>
    <scope>FUNCTION</scope>
    <scope>CATALYTIC ACTIVITY</scope>
    <scope>ENZYME KINETICS</scope>
    <scope>SUBCELLULAR LOCATION</scope>
</reference>
<reference key="4">
    <citation type="journal article" date="2014" name="Biochem. Biophys. Res. Commun.">
        <title>Folate in demethylation: the crystal structure of the rat dimethylglycine dehydrogenase complexed with tetrahydrofolate.</title>
        <authorList>
            <person name="Luka Z."/>
            <person name="Pakhomova S."/>
            <person name="Loukachevitch L.V."/>
            <person name="Newcomer M.E."/>
            <person name="Wagner C."/>
        </authorList>
    </citation>
    <scope>X-RAY CRYSTALLOGRAPHY (1.85 ANGSTROMS) OF 2-857 IN COMPLEXES WITH FAD AND TETRAHYDROFOLATE</scope>
    <scope>CATALYTIC ACTIVITY</scope>
    <scope>COFACTOR</scope>
    <scope>BIOPHYSICOCHEMICAL PROPERTIES</scope>
</reference>
<keyword id="KW-0002">3D-structure</keyword>
<keyword id="KW-0007">Acetylation</keyword>
<keyword id="KW-0903">Direct protein sequencing</keyword>
<keyword id="KW-0274">FAD</keyword>
<keyword id="KW-0285">Flavoprotein</keyword>
<keyword id="KW-0496">Mitochondrion</keyword>
<keyword id="KW-0560">Oxidoreductase</keyword>
<keyword id="KW-1185">Reference proteome</keyword>
<keyword id="KW-0809">Transit peptide</keyword>
<protein>
    <recommendedName>
        <fullName>Dimethylglycine dehydrogenase, mitochondrial</fullName>
        <ecNumber evidence="4 5">1.5.8.4</ecNumber>
    </recommendedName>
    <alternativeName>
        <fullName>ME2GLYDH</fullName>
    </alternativeName>
</protein>
<accession>Q63342</accession>
<organism>
    <name type="scientific">Rattus norvegicus</name>
    <name type="common">Rat</name>
    <dbReference type="NCBI Taxonomy" id="10116"/>
    <lineage>
        <taxon>Eukaryota</taxon>
        <taxon>Metazoa</taxon>
        <taxon>Chordata</taxon>
        <taxon>Craniata</taxon>
        <taxon>Vertebrata</taxon>
        <taxon>Euteleostomi</taxon>
        <taxon>Mammalia</taxon>
        <taxon>Eutheria</taxon>
        <taxon>Euarchontoglires</taxon>
        <taxon>Glires</taxon>
        <taxon>Rodentia</taxon>
        <taxon>Myomorpha</taxon>
        <taxon>Muroidea</taxon>
        <taxon>Muridae</taxon>
        <taxon>Murinae</taxon>
        <taxon>Rattus</taxon>
    </lineage>
</organism>
<dbReference type="EC" id="1.5.8.4" evidence="4 5"/>
<dbReference type="EMBL" id="X55995">
    <property type="protein sequence ID" value="CAA39468.1"/>
    <property type="molecule type" value="mRNA"/>
</dbReference>
<dbReference type="PIR" id="S16133">
    <property type="entry name" value="S16133"/>
</dbReference>
<dbReference type="PDB" id="4P9S">
    <property type="method" value="X-ray"/>
    <property type="resolution" value="2.32 A"/>
    <property type="chains" value="A/B=22-857"/>
</dbReference>
<dbReference type="PDB" id="4PAA">
    <property type="method" value="X-ray"/>
    <property type="resolution" value="2.26 A"/>
    <property type="chains" value="A/B=22-857"/>
</dbReference>
<dbReference type="PDB" id="4PAB">
    <property type="method" value="X-ray"/>
    <property type="resolution" value="1.85 A"/>
    <property type="chains" value="A/B=2-857"/>
</dbReference>
<dbReference type="PDBsum" id="4P9S"/>
<dbReference type="PDBsum" id="4PAA"/>
<dbReference type="PDBsum" id="4PAB"/>
<dbReference type="SMR" id="Q63342"/>
<dbReference type="FunCoup" id="Q63342">
    <property type="interactions" value="101"/>
</dbReference>
<dbReference type="IntAct" id="Q63342">
    <property type="interactions" value="1"/>
</dbReference>
<dbReference type="MINT" id="Q63342"/>
<dbReference type="STRING" id="10116.ENSRNOP00000075177"/>
<dbReference type="iPTMnet" id="Q63342"/>
<dbReference type="PhosphoSitePlus" id="Q63342"/>
<dbReference type="PaxDb" id="10116-ENSRNOP00000030481"/>
<dbReference type="UCSC" id="RGD:620453">
    <property type="organism name" value="rat"/>
</dbReference>
<dbReference type="AGR" id="RGD:620453"/>
<dbReference type="RGD" id="620453">
    <property type="gene designation" value="Dmgdh"/>
</dbReference>
<dbReference type="eggNOG" id="KOG2844">
    <property type="taxonomic scope" value="Eukaryota"/>
</dbReference>
<dbReference type="InParanoid" id="Q63342"/>
<dbReference type="PhylomeDB" id="Q63342"/>
<dbReference type="BioCyc" id="MetaCyc:MONOMER-16117"/>
<dbReference type="BRENDA" id="1.5.8.4">
    <property type="organism ID" value="5301"/>
</dbReference>
<dbReference type="Reactome" id="R-RNO-6798163">
    <property type="pathway name" value="Choline catabolism"/>
</dbReference>
<dbReference type="UniPathway" id="UPA00291">
    <property type="reaction ID" value="UER00433"/>
</dbReference>
<dbReference type="EvolutionaryTrace" id="Q63342"/>
<dbReference type="PRO" id="PR:Q63342"/>
<dbReference type="Proteomes" id="UP000002494">
    <property type="component" value="Unplaced"/>
</dbReference>
<dbReference type="GO" id="GO:0005737">
    <property type="term" value="C:cytoplasm"/>
    <property type="evidence" value="ECO:0000318"/>
    <property type="project" value="GO_Central"/>
</dbReference>
<dbReference type="GO" id="GO:0005759">
    <property type="term" value="C:mitochondrial matrix"/>
    <property type="evidence" value="ECO:0000318"/>
    <property type="project" value="GO_Central"/>
</dbReference>
<dbReference type="GO" id="GO:0005739">
    <property type="term" value="C:mitochondrion"/>
    <property type="evidence" value="ECO:0000318"/>
    <property type="project" value="GO_Central"/>
</dbReference>
<dbReference type="GO" id="GO:0047865">
    <property type="term" value="F:dimethylglycine dehydrogenase activity"/>
    <property type="evidence" value="ECO:0000314"/>
    <property type="project" value="RGD"/>
</dbReference>
<dbReference type="GO" id="GO:0050660">
    <property type="term" value="F:flavin adenine dinucleotide binding"/>
    <property type="evidence" value="ECO:0000314"/>
    <property type="project" value="RGD"/>
</dbReference>
<dbReference type="GO" id="GO:0005542">
    <property type="term" value="F:folic acid binding"/>
    <property type="evidence" value="ECO:0000314"/>
    <property type="project" value="RGD"/>
</dbReference>
<dbReference type="GO" id="GO:0006579">
    <property type="term" value="P:amino-acid betaine catabolic process"/>
    <property type="evidence" value="ECO:0007669"/>
    <property type="project" value="UniProtKB-UniPathway"/>
</dbReference>
<dbReference type="GO" id="GO:0042426">
    <property type="term" value="P:choline catabolic process"/>
    <property type="evidence" value="ECO:0000266"/>
    <property type="project" value="RGD"/>
</dbReference>
<dbReference type="GO" id="GO:0019695">
    <property type="term" value="P:choline metabolic process"/>
    <property type="evidence" value="ECO:0000304"/>
    <property type="project" value="RGD"/>
</dbReference>
<dbReference type="GO" id="GO:0035999">
    <property type="term" value="P:tetrahydrofolate interconversion"/>
    <property type="evidence" value="ECO:0000314"/>
    <property type="project" value="RGD"/>
</dbReference>
<dbReference type="FunFam" id="3.30.70.1400:FF:000005">
    <property type="entry name" value="Dimethylglycine dehydrogenase, mitochondrial"/>
    <property type="match status" value="1"/>
</dbReference>
<dbReference type="FunFam" id="2.40.30.110:FF:000005">
    <property type="entry name" value="dimethylglycine dehydrogenase, mitochondrial"/>
    <property type="match status" value="1"/>
</dbReference>
<dbReference type="Gene3D" id="2.40.30.110">
    <property type="entry name" value="Aminomethyltransferase beta-barrel domains"/>
    <property type="match status" value="1"/>
</dbReference>
<dbReference type="Gene3D" id="3.30.70.1400">
    <property type="entry name" value="Aminomethyltransferase beta-barrel domains"/>
    <property type="match status" value="1"/>
</dbReference>
<dbReference type="Gene3D" id="3.30.9.10">
    <property type="entry name" value="D-Amino Acid Oxidase, subunit A, domain 2"/>
    <property type="match status" value="1"/>
</dbReference>
<dbReference type="Gene3D" id="3.50.50.60">
    <property type="entry name" value="FAD/NAD(P)-binding domain"/>
    <property type="match status" value="1"/>
</dbReference>
<dbReference type="Gene3D" id="3.30.1360.120">
    <property type="entry name" value="Probable tRNA modification gtpase trme, domain 1"/>
    <property type="match status" value="1"/>
</dbReference>
<dbReference type="InterPro" id="IPR006076">
    <property type="entry name" value="FAD-dep_OxRdtase"/>
</dbReference>
<dbReference type="InterPro" id="IPR036188">
    <property type="entry name" value="FAD/NAD-bd_sf"/>
</dbReference>
<dbReference type="InterPro" id="IPR032503">
    <property type="entry name" value="FAO_M"/>
</dbReference>
<dbReference type="InterPro" id="IPR013977">
    <property type="entry name" value="GCST_C"/>
</dbReference>
<dbReference type="InterPro" id="IPR006222">
    <property type="entry name" value="GCV_T_N"/>
</dbReference>
<dbReference type="InterPro" id="IPR028896">
    <property type="entry name" value="GcvT/YgfZ/DmdA"/>
</dbReference>
<dbReference type="InterPro" id="IPR029043">
    <property type="entry name" value="GcvT/YgfZ_C"/>
</dbReference>
<dbReference type="InterPro" id="IPR027266">
    <property type="entry name" value="TrmE/GcvT_dom1"/>
</dbReference>
<dbReference type="PANTHER" id="PTHR43757">
    <property type="entry name" value="AMINOMETHYLTRANSFERASE"/>
    <property type="match status" value="1"/>
</dbReference>
<dbReference type="PANTHER" id="PTHR43757:SF2">
    <property type="entry name" value="AMINOMETHYLTRANSFERASE, MITOCHONDRIAL"/>
    <property type="match status" value="1"/>
</dbReference>
<dbReference type="Pfam" id="PF01266">
    <property type="entry name" value="DAO"/>
    <property type="match status" value="1"/>
</dbReference>
<dbReference type="Pfam" id="PF16350">
    <property type="entry name" value="FAO_M"/>
    <property type="match status" value="1"/>
</dbReference>
<dbReference type="Pfam" id="PF01571">
    <property type="entry name" value="GCV_T"/>
    <property type="match status" value="1"/>
</dbReference>
<dbReference type="Pfam" id="PF08669">
    <property type="entry name" value="GCV_T_C"/>
    <property type="match status" value="1"/>
</dbReference>
<dbReference type="SUPFAM" id="SSF101790">
    <property type="entry name" value="Aminomethyltransferase beta-barrel domain"/>
    <property type="match status" value="1"/>
</dbReference>
<dbReference type="SUPFAM" id="SSF54373">
    <property type="entry name" value="FAD-linked reductases, C-terminal domain"/>
    <property type="match status" value="1"/>
</dbReference>
<dbReference type="SUPFAM" id="SSF51905">
    <property type="entry name" value="FAD/NAD(P)-binding domain"/>
    <property type="match status" value="1"/>
</dbReference>
<dbReference type="SUPFAM" id="SSF103025">
    <property type="entry name" value="Folate-binding domain"/>
    <property type="match status" value="1"/>
</dbReference>
<comment type="function">
    <text evidence="4">Catalyzes the demethylation of N,N-dimethylglycine to sarcosine. Also has activity with sarcosine in vitro.</text>
</comment>
<comment type="catalytic activity">
    <reaction evidence="4 5">
        <text>(6S)-5,6,7,8-tetrahydrofolyl-(gamma-L-Glu)(n) + N,N-dimethylglycine + oxidized [electron-transfer flavoprotein] + H(+) = (6R)-5,10-methylenetetrahydrofolyl-(gamma-L-Glu)(n) + sarcosine + reduced [electron-transfer flavoprotein]</text>
        <dbReference type="Rhea" id="RHEA:52856"/>
        <dbReference type="Rhea" id="RHEA-COMP:10685"/>
        <dbReference type="Rhea" id="RHEA-COMP:10686"/>
        <dbReference type="Rhea" id="RHEA-COMP:13257"/>
        <dbReference type="Rhea" id="RHEA-COMP:14738"/>
        <dbReference type="ChEBI" id="CHEBI:15378"/>
        <dbReference type="ChEBI" id="CHEBI:57433"/>
        <dbReference type="ChEBI" id="CHEBI:57692"/>
        <dbReference type="ChEBI" id="CHEBI:58251"/>
        <dbReference type="ChEBI" id="CHEBI:58307"/>
        <dbReference type="ChEBI" id="CHEBI:136572"/>
        <dbReference type="ChEBI" id="CHEBI:141005"/>
        <dbReference type="EC" id="1.5.8.4"/>
    </reaction>
</comment>
<comment type="cofactor">
    <cofactor evidence="5 6">
        <name>FAD</name>
        <dbReference type="ChEBI" id="CHEBI:57692"/>
    </cofactor>
    <text evidence="5 6">Binds 1 FAD covalently per monomer.</text>
</comment>
<comment type="biophysicochemical properties">
    <kinetics>
        <KM evidence="5">760 uM for N,N-dimethylglycine for precursor enzyme</KM>
        <KM evidence="5">580 uM for N,N-dimethylglycine for mature enzyme</KM>
        <text evidence="5">kcat is 1.43-1.48 sec(-1).</text>
    </kinetics>
</comment>
<comment type="pathway">
    <text>Amine and polyamine degradation; betaine degradation; sarcosine from betaine: step 2/2.</text>
</comment>
<comment type="subcellular location">
    <subcellularLocation>
        <location evidence="4">Mitochondrion</location>
    </subcellularLocation>
</comment>
<comment type="similarity">
    <text evidence="7">Belongs to the GcvT family.</text>
</comment>
<feature type="transit peptide" description="Mitochondrion" evidence="2">
    <location>
        <begin position="1"/>
        <end position="43"/>
    </location>
</feature>
<feature type="chain" id="PRO_0000010769" description="Dimethylglycine dehydrogenase, mitochondrial">
    <location>
        <begin position="44"/>
        <end position="857"/>
    </location>
</feature>
<feature type="region of interest" description="Disordered" evidence="3">
    <location>
        <begin position="15"/>
        <end position="39"/>
    </location>
</feature>
<feature type="binding site" evidence="5 8 9 10">
    <location>
        <begin position="52"/>
        <end position="53"/>
    </location>
    <ligand>
        <name>FAD</name>
        <dbReference type="ChEBI" id="CHEBI:57692"/>
    </ligand>
</feature>
<feature type="binding site" evidence="5 8 9 10">
    <location>
        <begin position="73"/>
        <end position="74"/>
    </location>
    <ligand>
        <name>FAD</name>
        <dbReference type="ChEBI" id="CHEBI:57692"/>
    </ligand>
</feature>
<feature type="binding site" evidence="5 8 9 10">
    <location>
        <begin position="80"/>
        <end position="88"/>
    </location>
    <ligand>
        <name>FAD</name>
        <dbReference type="ChEBI" id="CHEBI:57692"/>
    </ligand>
</feature>
<feature type="binding site" evidence="5 8 9 10">
    <location>
        <position position="212"/>
    </location>
    <ligand>
        <name>FAD</name>
        <dbReference type="ChEBI" id="CHEBI:57692"/>
    </ligand>
</feature>
<feature type="binding site" evidence="5 8 10">
    <location>
        <position position="244"/>
    </location>
    <ligand>
        <name>FAD</name>
        <dbReference type="ChEBI" id="CHEBI:57692"/>
    </ligand>
</feature>
<feature type="binding site" evidence="5 8 9 10">
    <location>
        <begin position="390"/>
        <end position="395"/>
    </location>
    <ligand>
        <name>FAD</name>
        <dbReference type="ChEBI" id="CHEBI:57692"/>
    </ligand>
</feature>
<feature type="binding site" evidence="5 9 10">
    <location>
        <begin position="573"/>
        <end position="575"/>
    </location>
    <ligand>
        <name>(6S)-5,6,7,8-tetrahydrofolate</name>
        <dbReference type="ChEBI" id="CHEBI:57453"/>
    </ligand>
</feature>
<feature type="binding site" evidence="5 9">
    <location>
        <position position="669"/>
    </location>
    <ligand>
        <name>(6S)-5,6,7,8-tetrahydrofolate</name>
        <dbReference type="ChEBI" id="CHEBI:57453"/>
    </ligand>
</feature>
<feature type="binding site" evidence="5 9 10">
    <location>
        <begin position="676"/>
        <end position="678"/>
    </location>
    <ligand>
        <name>(6S)-5,6,7,8-tetrahydrofolate</name>
        <dbReference type="ChEBI" id="CHEBI:57453"/>
    </ligand>
</feature>
<feature type="binding site" evidence="5 9 10">
    <location>
        <position position="737"/>
    </location>
    <ligand>
        <name>(6S)-5,6,7,8-tetrahydrofolate</name>
        <dbReference type="ChEBI" id="CHEBI:57453"/>
    </ligand>
</feature>
<feature type="modified residue" description="Tele-8alpha-FAD histidine" evidence="5 6 8 9 10">
    <location>
        <position position="84"/>
    </location>
</feature>
<feature type="modified residue" description="N6-acetyllysine" evidence="1">
    <location>
        <position position="107"/>
    </location>
</feature>
<feature type="modified residue" description="N6-acetyllysine; alternate" evidence="1">
    <location>
        <position position="141"/>
    </location>
</feature>
<feature type="modified residue" description="N6-succinyllysine; alternate" evidence="1">
    <location>
        <position position="141"/>
    </location>
</feature>
<feature type="modified residue" description="N6-acetyllysine" evidence="1">
    <location>
        <position position="161"/>
    </location>
</feature>
<feature type="modified residue" description="N6-acetyllysine" evidence="1">
    <location>
        <position position="216"/>
    </location>
</feature>
<feature type="modified residue" description="N6-succinyllysine" evidence="1">
    <location>
        <position position="310"/>
    </location>
</feature>
<feature type="modified residue" description="N6-succinyllysine" evidence="1">
    <location>
        <position position="312"/>
    </location>
</feature>
<feature type="modified residue" description="N6-acetyllysine" evidence="1">
    <location>
        <position position="328"/>
    </location>
</feature>
<feature type="modified residue" description="N6-acetyllysine" evidence="1">
    <location>
        <position position="353"/>
    </location>
</feature>
<feature type="modified residue" description="N6-acetyllysine; alternate" evidence="1">
    <location>
        <position position="427"/>
    </location>
</feature>
<feature type="modified residue" description="N6-succinyllysine; alternate" evidence="1">
    <location>
        <position position="427"/>
    </location>
</feature>
<feature type="modified residue" description="N6-acetyllysine; alternate" evidence="1">
    <location>
        <position position="469"/>
    </location>
</feature>
<feature type="modified residue" description="N6-succinyllysine; alternate" evidence="1">
    <location>
        <position position="469"/>
    </location>
</feature>
<feature type="modified residue" description="N6-acetyllysine; alternate" evidence="1">
    <location>
        <position position="516"/>
    </location>
</feature>
<feature type="modified residue" description="N6-succinyllysine; alternate" evidence="1">
    <location>
        <position position="516"/>
    </location>
</feature>
<feature type="modified residue" description="N6-acetyllysine; alternate" evidence="1">
    <location>
        <position position="648"/>
    </location>
</feature>
<feature type="modified residue" description="N6-succinyllysine; alternate" evidence="1">
    <location>
        <position position="648"/>
    </location>
</feature>
<feature type="modified residue" description="N6-acetyllysine" evidence="1">
    <location>
        <position position="757"/>
    </location>
</feature>
<feature type="modified residue" description="N6-acetyllysine; alternate" evidence="1">
    <location>
        <position position="786"/>
    </location>
</feature>
<feature type="modified residue" description="N6-succinyllysine; alternate" evidence="1">
    <location>
        <position position="786"/>
    </location>
</feature>
<feature type="modified residue" description="N6-succinyllysine" evidence="1">
    <location>
        <position position="788"/>
    </location>
</feature>
<feature type="strand" evidence="12">
    <location>
        <begin position="41"/>
        <end position="48"/>
    </location>
</feature>
<feature type="helix" evidence="12">
    <location>
        <begin position="52"/>
        <end position="63"/>
    </location>
</feature>
<feature type="strand" evidence="12">
    <location>
        <begin position="68"/>
        <end position="72"/>
    </location>
</feature>
<feature type="strand" evidence="12">
    <location>
        <begin position="74"/>
        <end position="76"/>
    </location>
</feature>
<feature type="turn" evidence="12">
    <location>
        <begin position="77"/>
        <end position="81"/>
    </location>
</feature>
<feature type="helix" evidence="12">
    <location>
        <begin position="82"/>
        <end position="84"/>
    </location>
</feature>
<feature type="strand" evidence="12">
    <location>
        <begin position="94"/>
        <end position="96"/>
    </location>
</feature>
<feature type="helix" evidence="12">
    <location>
        <begin position="98"/>
        <end position="116"/>
    </location>
</feature>
<feature type="strand" evidence="12">
    <location>
        <begin position="127"/>
        <end position="131"/>
    </location>
</feature>
<feature type="helix" evidence="12">
    <location>
        <begin position="134"/>
        <end position="147"/>
    </location>
</feature>
<feature type="strand" evidence="11">
    <location>
        <begin position="150"/>
        <end position="152"/>
    </location>
</feature>
<feature type="strand" evidence="12">
    <location>
        <begin position="155"/>
        <end position="157"/>
    </location>
</feature>
<feature type="helix" evidence="12">
    <location>
        <begin position="159"/>
        <end position="165"/>
    </location>
</feature>
<feature type="strand" evidence="12">
    <location>
        <begin position="176"/>
        <end position="180"/>
    </location>
</feature>
<feature type="helix" evidence="12">
    <location>
        <begin position="188"/>
        <end position="201"/>
    </location>
</feature>
<feature type="strand" evidence="12">
    <location>
        <begin position="205"/>
        <end position="209"/>
    </location>
</feature>
<feature type="strand" evidence="12">
    <location>
        <begin position="214"/>
        <end position="217"/>
    </location>
</feature>
<feature type="strand" evidence="12">
    <location>
        <begin position="223"/>
        <end position="227"/>
    </location>
</feature>
<feature type="strand" evidence="12">
    <location>
        <begin position="230"/>
        <end position="239"/>
    </location>
</feature>
<feature type="helix" evidence="12">
    <location>
        <begin position="242"/>
        <end position="244"/>
    </location>
</feature>
<feature type="helix" evidence="12">
    <location>
        <begin position="245"/>
        <end position="250"/>
    </location>
</feature>
<feature type="turn" evidence="12">
    <location>
        <begin position="251"/>
        <end position="253"/>
    </location>
</feature>
<feature type="strand" evidence="12">
    <location>
        <begin position="259"/>
        <end position="268"/>
    </location>
</feature>
<feature type="helix" evidence="12">
    <location>
        <begin position="272"/>
        <end position="275"/>
    </location>
</feature>
<feature type="strand" evidence="12">
    <location>
        <begin position="283"/>
        <end position="286"/>
    </location>
</feature>
<feature type="turn" evidence="12">
    <location>
        <begin position="287"/>
        <end position="290"/>
    </location>
</feature>
<feature type="strand" evidence="12">
    <location>
        <begin position="291"/>
        <end position="296"/>
    </location>
</feature>
<feature type="strand" evidence="12">
    <location>
        <begin position="299"/>
        <end position="304"/>
    </location>
</feature>
<feature type="turn" evidence="12">
    <location>
        <begin position="308"/>
        <end position="310"/>
    </location>
</feature>
<feature type="helix" evidence="12">
    <location>
        <begin position="315"/>
        <end position="320"/>
    </location>
</feature>
<feature type="helix" evidence="12">
    <location>
        <begin position="336"/>
        <end position="338"/>
    </location>
</feature>
<feature type="helix" evidence="12">
    <location>
        <begin position="339"/>
        <end position="348"/>
    </location>
</feature>
<feature type="helix" evidence="12">
    <location>
        <begin position="350"/>
        <end position="353"/>
    </location>
</feature>
<feature type="strand" evidence="12">
    <location>
        <begin position="357"/>
        <end position="367"/>
    </location>
</feature>
<feature type="strand" evidence="12">
    <location>
        <begin position="374"/>
        <end position="377"/>
    </location>
</feature>
<feature type="strand" evidence="12">
    <location>
        <begin position="384"/>
        <end position="388"/>
    </location>
</feature>
<feature type="helix" evidence="12">
    <location>
        <begin position="393"/>
        <end position="410"/>
    </location>
</feature>
<feature type="helix" evidence="12">
    <location>
        <begin position="418"/>
        <end position="420"/>
    </location>
</feature>
<feature type="helix" evidence="12">
    <location>
        <begin position="422"/>
        <end position="424"/>
    </location>
</feature>
<feature type="helix" evidence="12">
    <location>
        <begin position="431"/>
        <end position="443"/>
    </location>
</feature>
<feature type="turn" evidence="12">
    <location>
        <begin position="444"/>
        <end position="446"/>
    </location>
</feature>
<feature type="helix" evidence="12">
    <location>
        <begin position="467"/>
        <end position="471"/>
    </location>
</feature>
<feature type="turn" evidence="12">
    <location>
        <begin position="472"/>
        <end position="474"/>
    </location>
</feature>
<feature type="strand" evidence="12">
    <location>
        <begin position="475"/>
        <end position="480"/>
    </location>
</feature>
<feature type="strand" evidence="12">
    <location>
        <begin position="483"/>
        <end position="489"/>
    </location>
</feature>
<feature type="helix" evidence="12">
    <location>
        <begin position="508"/>
        <end position="520"/>
    </location>
</feature>
<feature type="strand" evidence="12">
    <location>
        <begin position="523"/>
        <end position="526"/>
    </location>
</feature>
<feature type="strand" evidence="12">
    <location>
        <begin position="530"/>
        <end position="537"/>
    </location>
</feature>
<feature type="helix" evidence="12">
    <location>
        <begin position="540"/>
        <end position="547"/>
    </location>
</feature>
<feature type="strand" evidence="12">
    <location>
        <begin position="548"/>
        <end position="550"/>
    </location>
</feature>
<feature type="strand" evidence="12">
    <location>
        <begin position="557"/>
        <end position="564"/>
    </location>
</feature>
<feature type="strand" evidence="12">
    <location>
        <begin position="570"/>
        <end position="580"/>
    </location>
</feature>
<feature type="strand" evidence="12">
    <location>
        <begin position="583"/>
        <end position="588"/>
    </location>
</feature>
<feature type="helix" evidence="12">
    <location>
        <begin position="590"/>
        <end position="592"/>
    </location>
</feature>
<feature type="helix" evidence="12">
    <location>
        <begin position="593"/>
        <end position="606"/>
    </location>
</feature>
<feature type="strand" evidence="12">
    <location>
        <begin position="612"/>
        <end position="615"/>
    </location>
</feature>
<feature type="turn" evidence="12">
    <location>
        <begin position="617"/>
        <end position="619"/>
    </location>
</feature>
<feature type="strand" evidence="12">
    <location>
        <begin position="620"/>
        <end position="627"/>
    </location>
</feature>
<feature type="helix" evidence="12">
    <location>
        <begin position="630"/>
        <end position="635"/>
    </location>
</feature>
<feature type="turn" evidence="12">
    <location>
        <begin position="644"/>
        <end position="646"/>
    </location>
</feature>
<feature type="strand" evidence="12">
    <location>
        <begin position="651"/>
        <end position="657"/>
    </location>
</feature>
<feature type="strand" evidence="12">
    <location>
        <begin position="660"/>
        <end position="665"/>
    </location>
</feature>
<feature type="strand" evidence="12">
    <location>
        <begin position="671"/>
        <end position="680"/>
    </location>
</feature>
<feature type="helix" evidence="12">
    <location>
        <begin position="681"/>
        <end position="683"/>
    </location>
</feature>
<feature type="helix" evidence="12">
    <location>
        <begin position="684"/>
        <end position="694"/>
    </location>
</feature>
<feature type="turn" evidence="12">
    <location>
        <begin position="695"/>
        <end position="699"/>
    </location>
</feature>
<feature type="helix" evidence="12">
    <location>
        <begin position="705"/>
        <end position="714"/>
    </location>
</feature>
<feature type="turn" evidence="12">
    <location>
        <begin position="720"/>
        <end position="722"/>
    </location>
</feature>
<feature type="turn" evidence="12">
    <location>
        <begin position="730"/>
        <end position="734"/>
    </location>
</feature>
<feature type="helix" evidence="12">
    <location>
        <begin position="736"/>
        <end position="738"/>
    </location>
</feature>
<feature type="strand" evidence="12">
    <location>
        <begin position="743"/>
        <end position="745"/>
    </location>
</feature>
<feature type="helix" evidence="12">
    <location>
        <begin position="750"/>
        <end position="759"/>
    </location>
</feature>
<feature type="strand" evidence="12">
    <location>
        <begin position="762"/>
        <end position="770"/>
    </location>
</feature>
<feature type="strand" evidence="12">
    <location>
        <begin position="782"/>
        <end position="785"/>
    </location>
</feature>
<feature type="strand" evidence="12">
    <location>
        <begin position="788"/>
        <end position="799"/>
    </location>
</feature>
<feature type="turn" evidence="12">
    <location>
        <begin position="800"/>
        <end position="803"/>
    </location>
</feature>
<feature type="strand" evidence="12">
    <location>
        <begin position="804"/>
        <end position="812"/>
    </location>
</feature>
<feature type="helix" evidence="12">
    <location>
        <begin position="813"/>
        <end position="815"/>
    </location>
</feature>
<feature type="strand" evidence="12">
    <location>
        <begin position="821"/>
        <end position="826"/>
    </location>
</feature>
<feature type="strand" evidence="12">
    <location>
        <begin position="829"/>
        <end position="835"/>
    </location>
</feature>
<feature type="helix" evidence="12">
    <location>
        <begin position="844"/>
        <end position="857"/>
    </location>
</feature>
<gene>
    <name type="primary">Dmgdh</name>
</gene>